<proteinExistence type="evidence at protein level"/>
<gene>
    <name type="primary">Ttbk2</name>
    <name type="synonym">Bby</name>
    <name type="synonym">Kiaa0847</name>
    <name type="synonym">Ttbk1</name>
</gene>
<dbReference type="EC" id="2.7.11.1"/>
<dbReference type="EMBL" id="AK053820">
    <property type="protein sequence ID" value="BAC35540.1"/>
    <property type="molecule type" value="mRNA"/>
</dbReference>
<dbReference type="EMBL" id="AK137024">
    <property type="protein sequence ID" value="BAE23206.1"/>
    <property type="molecule type" value="mRNA"/>
</dbReference>
<dbReference type="EMBL" id="AK148269">
    <property type="protein sequence ID" value="BAE28449.1"/>
    <property type="molecule type" value="mRNA"/>
</dbReference>
<dbReference type="EMBL" id="AK161858">
    <property type="protein sequence ID" value="BAE36609.1"/>
    <property type="molecule type" value="mRNA"/>
</dbReference>
<dbReference type="EMBL" id="AK220258">
    <property type="protein sequence ID" value="BAD90183.1"/>
    <property type="status" value="ALT_INIT"/>
    <property type="molecule type" value="mRNA"/>
</dbReference>
<dbReference type="EMBL" id="AL935168">
    <property type="status" value="NOT_ANNOTATED_CDS"/>
    <property type="molecule type" value="Genomic_DNA"/>
</dbReference>
<dbReference type="EMBL" id="AB046593">
    <property type="protein sequence ID" value="BAB62004.2"/>
    <property type="molecule type" value="mRNA"/>
</dbReference>
<dbReference type="CCDS" id="CCDS16627.1">
    <molecule id="Q3UVR3-1"/>
</dbReference>
<dbReference type="RefSeq" id="NP_001020027.1">
    <molecule id="Q3UVR3-1"/>
    <property type="nucleotide sequence ID" value="NM_001024856.3"/>
</dbReference>
<dbReference type="RefSeq" id="NP_001020028.1">
    <molecule id="Q3UVR3-1"/>
    <property type="nucleotide sequence ID" value="NM_001024857.3"/>
</dbReference>
<dbReference type="RefSeq" id="NP_542966.2">
    <property type="nucleotide sequence ID" value="NM_080788.3"/>
</dbReference>
<dbReference type="SMR" id="Q3UVR3"/>
<dbReference type="FunCoup" id="Q3UVR3">
    <property type="interactions" value="2243"/>
</dbReference>
<dbReference type="STRING" id="10090.ENSMUSP00000028740"/>
<dbReference type="MoonProt" id="Q3UVR3"/>
<dbReference type="GlyGen" id="Q3UVR3">
    <property type="glycosylation" value="1 site"/>
</dbReference>
<dbReference type="iPTMnet" id="Q3UVR3"/>
<dbReference type="PhosphoSitePlus" id="Q3UVR3"/>
<dbReference type="PaxDb" id="10090-ENSMUSP00000028740"/>
<dbReference type="ProteomicsDB" id="297670">
    <molecule id="Q3UVR3-1"/>
</dbReference>
<dbReference type="ProteomicsDB" id="297671">
    <molecule id="Q3UVR3-2"/>
</dbReference>
<dbReference type="Antibodypedia" id="6214">
    <property type="antibodies" value="216 antibodies from 30 providers"/>
</dbReference>
<dbReference type="DNASU" id="140810"/>
<dbReference type="Ensembl" id="ENSMUST00000057135.14">
    <molecule id="Q3UVR3-1"/>
    <property type="protein sequence ID" value="ENSMUSP00000055032.8"/>
    <property type="gene ID" value="ENSMUSG00000090100.8"/>
</dbReference>
<dbReference type="Ensembl" id="ENSMUST00000085840.11">
    <molecule id="Q3UVR3-1"/>
    <property type="protein sequence ID" value="ENSMUSP00000083001.5"/>
    <property type="gene ID" value="ENSMUSG00000090100.8"/>
</dbReference>
<dbReference type="GeneID" id="140810"/>
<dbReference type="KEGG" id="mmu:140810"/>
<dbReference type="UCSC" id="uc008lww.2">
    <molecule id="Q3UVR3-1"/>
    <property type="organism name" value="mouse"/>
</dbReference>
<dbReference type="AGR" id="MGI:2155779"/>
<dbReference type="CTD" id="146057"/>
<dbReference type="MGI" id="MGI:2155779">
    <property type="gene designation" value="Ttbk2"/>
</dbReference>
<dbReference type="VEuPathDB" id="HostDB:ENSMUSG00000090100"/>
<dbReference type="eggNOG" id="KOG1164">
    <property type="taxonomic scope" value="Eukaryota"/>
</dbReference>
<dbReference type="GeneTree" id="ENSGT00940000160367"/>
<dbReference type="InParanoid" id="Q3UVR3"/>
<dbReference type="OMA" id="DPLHQRQ"/>
<dbReference type="OrthoDB" id="5979581at2759"/>
<dbReference type="BRENDA" id="2.7.11.26">
    <property type="organism ID" value="3474"/>
</dbReference>
<dbReference type="Reactome" id="R-MMU-5620912">
    <property type="pathway name" value="Anchoring of the basal body to the plasma membrane"/>
</dbReference>
<dbReference type="BioGRID-ORCS" id="140810">
    <property type="hits" value="4 hits in 79 CRISPR screens"/>
</dbReference>
<dbReference type="ChiTaRS" id="Ttbk2">
    <property type="organism name" value="mouse"/>
</dbReference>
<dbReference type="PRO" id="PR:Q3UVR3"/>
<dbReference type="Proteomes" id="UP000000589">
    <property type="component" value="Chromosome 2"/>
</dbReference>
<dbReference type="RNAct" id="Q3UVR3">
    <property type="molecule type" value="protein"/>
</dbReference>
<dbReference type="Bgee" id="ENSMUSG00000090100">
    <property type="expression patterns" value="Expressed in spermatid and 212 other cell types or tissues"/>
</dbReference>
<dbReference type="ExpressionAtlas" id="Q3UVR3">
    <property type="expression patterns" value="baseline and differential"/>
</dbReference>
<dbReference type="GO" id="GO:0005814">
    <property type="term" value="C:centriole"/>
    <property type="evidence" value="ECO:0000314"/>
    <property type="project" value="UniProtKB"/>
</dbReference>
<dbReference type="GO" id="GO:0036064">
    <property type="term" value="C:ciliary basal body"/>
    <property type="evidence" value="ECO:0000314"/>
    <property type="project" value="UniProtKB"/>
</dbReference>
<dbReference type="GO" id="GO:0097546">
    <property type="term" value="C:ciliary base"/>
    <property type="evidence" value="ECO:0000314"/>
    <property type="project" value="MGI"/>
</dbReference>
<dbReference type="GO" id="GO:0035869">
    <property type="term" value="C:ciliary transition zone"/>
    <property type="evidence" value="ECO:0000314"/>
    <property type="project" value="UniProtKB"/>
</dbReference>
<dbReference type="GO" id="GO:0005829">
    <property type="term" value="C:cytosol"/>
    <property type="evidence" value="ECO:0007669"/>
    <property type="project" value="UniProtKB-SubCell"/>
</dbReference>
<dbReference type="GO" id="GO:0005634">
    <property type="term" value="C:nucleus"/>
    <property type="evidence" value="ECO:0000250"/>
    <property type="project" value="UniProtKB"/>
</dbReference>
<dbReference type="GO" id="GO:0005524">
    <property type="term" value="F:ATP binding"/>
    <property type="evidence" value="ECO:0007669"/>
    <property type="project" value="UniProtKB-KW"/>
</dbReference>
<dbReference type="GO" id="GO:0019894">
    <property type="term" value="F:kinesin binding"/>
    <property type="evidence" value="ECO:0007669"/>
    <property type="project" value="Ensembl"/>
</dbReference>
<dbReference type="GO" id="GO:0106310">
    <property type="term" value="F:protein serine kinase activity"/>
    <property type="evidence" value="ECO:0007669"/>
    <property type="project" value="RHEA"/>
</dbReference>
<dbReference type="GO" id="GO:0004674">
    <property type="term" value="F:protein serine/threonine kinase activity"/>
    <property type="evidence" value="ECO:0000314"/>
    <property type="project" value="MGI"/>
</dbReference>
<dbReference type="GO" id="GO:0021681">
    <property type="term" value="P:cerebellar granular layer development"/>
    <property type="evidence" value="ECO:0000315"/>
    <property type="project" value="ARUK-UCL"/>
</dbReference>
<dbReference type="GO" id="GO:0021935">
    <property type="term" value="P:cerebellar granule cell precursor tangential migration"/>
    <property type="evidence" value="ECO:0000315"/>
    <property type="project" value="ARUK-UCL"/>
</dbReference>
<dbReference type="GO" id="GO:0021549">
    <property type="term" value="P:cerebellum development"/>
    <property type="evidence" value="ECO:0000315"/>
    <property type="project" value="ARUK-UCL"/>
</dbReference>
<dbReference type="GO" id="GO:0060271">
    <property type="term" value="P:cilium assembly"/>
    <property type="evidence" value="ECO:0000315"/>
    <property type="project" value="UniProtKB"/>
</dbReference>
<dbReference type="GO" id="GO:1990403">
    <property type="term" value="P:embryonic brain development"/>
    <property type="evidence" value="ECO:0000315"/>
    <property type="project" value="MGI"/>
</dbReference>
<dbReference type="GO" id="GO:0042733">
    <property type="term" value="P:embryonic digit morphogenesis"/>
    <property type="evidence" value="ECO:0000315"/>
    <property type="project" value="MGI"/>
</dbReference>
<dbReference type="GO" id="GO:0030900">
    <property type="term" value="P:forebrain development"/>
    <property type="evidence" value="ECO:0000315"/>
    <property type="project" value="MGI"/>
</dbReference>
<dbReference type="GO" id="GO:0000226">
    <property type="term" value="P:microtubule cytoskeleton organization"/>
    <property type="evidence" value="ECO:0007669"/>
    <property type="project" value="Ensembl"/>
</dbReference>
<dbReference type="GO" id="GO:0007026">
    <property type="term" value="P:negative regulation of microtubule depolymerization"/>
    <property type="evidence" value="ECO:0007669"/>
    <property type="project" value="Ensembl"/>
</dbReference>
<dbReference type="GO" id="GO:1903828">
    <property type="term" value="P:negative regulation of protein localization"/>
    <property type="evidence" value="ECO:0000315"/>
    <property type="project" value="MGI"/>
</dbReference>
<dbReference type="GO" id="GO:1902817">
    <property type="term" value="P:negative regulation of protein localization to microtubule"/>
    <property type="evidence" value="ECO:0007669"/>
    <property type="project" value="Ensembl"/>
</dbReference>
<dbReference type="GO" id="GO:0021915">
    <property type="term" value="P:neural tube development"/>
    <property type="evidence" value="ECO:0000315"/>
    <property type="project" value="MGI"/>
</dbReference>
<dbReference type="GO" id="GO:0018105">
    <property type="term" value="P:peptidyl-serine phosphorylation"/>
    <property type="evidence" value="ECO:0000250"/>
    <property type="project" value="UniProtKB"/>
</dbReference>
<dbReference type="GO" id="GO:1902857">
    <property type="term" value="P:positive regulation of non-motile cilium assembly"/>
    <property type="evidence" value="ECO:0000315"/>
    <property type="project" value="MGI"/>
</dbReference>
<dbReference type="GO" id="GO:0008104">
    <property type="term" value="P:protein localization"/>
    <property type="evidence" value="ECO:0000315"/>
    <property type="project" value="MGI"/>
</dbReference>
<dbReference type="GO" id="GO:0033365">
    <property type="term" value="P:protein localization to organelle"/>
    <property type="evidence" value="ECO:0000315"/>
    <property type="project" value="MGI"/>
</dbReference>
<dbReference type="GO" id="GO:0030334">
    <property type="term" value="P:regulation of cell migration"/>
    <property type="evidence" value="ECO:0007669"/>
    <property type="project" value="Ensembl"/>
</dbReference>
<dbReference type="GO" id="GO:0008589">
    <property type="term" value="P:regulation of smoothened signaling pathway"/>
    <property type="evidence" value="ECO:0000315"/>
    <property type="project" value="MGI"/>
</dbReference>
<dbReference type="GO" id="GO:0007224">
    <property type="term" value="P:smoothened signaling pathway"/>
    <property type="evidence" value="ECO:0000315"/>
    <property type="project" value="UniProtKB"/>
</dbReference>
<dbReference type="CDD" id="cd14129">
    <property type="entry name" value="STKc_TTBK2"/>
    <property type="match status" value="1"/>
</dbReference>
<dbReference type="FunFam" id="1.10.510.10:FF:000167">
    <property type="entry name" value="Tau tubulin kinase 1"/>
    <property type="match status" value="1"/>
</dbReference>
<dbReference type="FunFam" id="3.30.200.20:FF:000358">
    <property type="entry name" value="Tau tubulin kinase 2b"/>
    <property type="match status" value="1"/>
</dbReference>
<dbReference type="Gene3D" id="1.10.510.10">
    <property type="entry name" value="Transferase(Phosphotransferase) domain 1"/>
    <property type="match status" value="1"/>
</dbReference>
<dbReference type="InterPro" id="IPR050235">
    <property type="entry name" value="CK1_Ser-Thr_kinase"/>
</dbReference>
<dbReference type="InterPro" id="IPR011009">
    <property type="entry name" value="Kinase-like_dom_sf"/>
</dbReference>
<dbReference type="InterPro" id="IPR000719">
    <property type="entry name" value="Prot_kinase_dom"/>
</dbReference>
<dbReference type="InterPro" id="IPR017441">
    <property type="entry name" value="Protein_kinase_ATP_BS"/>
</dbReference>
<dbReference type="InterPro" id="IPR047915">
    <property type="entry name" value="TTBK2_STKc"/>
</dbReference>
<dbReference type="PANTHER" id="PTHR11909">
    <property type="entry name" value="CASEIN KINASE-RELATED"/>
    <property type="match status" value="1"/>
</dbReference>
<dbReference type="Pfam" id="PF00069">
    <property type="entry name" value="Pkinase"/>
    <property type="match status" value="1"/>
</dbReference>
<dbReference type="SMART" id="SM00220">
    <property type="entry name" value="S_TKc"/>
    <property type="match status" value="1"/>
</dbReference>
<dbReference type="SUPFAM" id="SSF56112">
    <property type="entry name" value="Protein kinase-like (PK-like)"/>
    <property type="match status" value="1"/>
</dbReference>
<dbReference type="PROSITE" id="PS00107">
    <property type="entry name" value="PROTEIN_KINASE_ATP"/>
    <property type="match status" value="1"/>
</dbReference>
<dbReference type="PROSITE" id="PS50011">
    <property type="entry name" value="PROTEIN_KINASE_DOM"/>
    <property type="match status" value="1"/>
</dbReference>
<name>TTBK2_MOUSE</name>
<organism>
    <name type="scientific">Mus musculus</name>
    <name type="common">Mouse</name>
    <dbReference type="NCBI Taxonomy" id="10090"/>
    <lineage>
        <taxon>Eukaryota</taxon>
        <taxon>Metazoa</taxon>
        <taxon>Chordata</taxon>
        <taxon>Craniata</taxon>
        <taxon>Vertebrata</taxon>
        <taxon>Euteleostomi</taxon>
        <taxon>Mammalia</taxon>
        <taxon>Eutheria</taxon>
        <taxon>Euarchontoglires</taxon>
        <taxon>Glires</taxon>
        <taxon>Rodentia</taxon>
        <taxon>Myomorpha</taxon>
        <taxon>Muroidea</taxon>
        <taxon>Muridae</taxon>
        <taxon>Murinae</taxon>
        <taxon>Mus</taxon>
        <taxon>Mus</taxon>
    </lineage>
</organism>
<accession>Q3UVR3</accession>
<accession>A2AW12</accession>
<accession>Q3TSR6</accession>
<accession>Q3UFW0</accession>
<accession>Q571D1</accession>
<accession>Q8BKA4</accession>
<accession>Q924U8</accession>
<sequence>MSGGGEQPDILSVGILVKERWKVLRKIGGGGFGEIYDALDMLTRENVALKVESAQQPKQVLKMEVAVLKKLQGKDHVCRFIGCGRNDRFNYVVMQLQGRNLADLRRSQSRGTFTISTTLRLGKQILESIESIHSVGFLHRDIKPSNFAMGRFPSTCRKCFMLDFGLARQFTNSCGDVRPPRAVAGFRGTVRYASINAHRNREMGRHDDLWSLFYMLVEFVVGQLPWRKIKDKEQVGSIKERYDHRLMLKHLPPEFSTFLDHISSLDYFTKPDYQLLTSVFDNSIKTFGVIESDPFDWEKSGTDGSLTTTTTSATPQLHTRLTPAAIGIANATPIPGDLLRENTDEVFPDEQLSDGENGIPVGVSPDKLPGSLGHPRPQEKDVWEEMDINKNKIKLGICKAATEEENSHGQVNGILNAPSLGSPIRVRSEITQPDRDVPLVRKLRSIHSFELEKRLTLEPKPDTDKFLETCMEKMQKDSSAGKEPVPPALPHKPCVPVVTHTDHIWHYDDEYLPDASKPASANTPEQADGGGSNGFIAVNLSSCKQEVDSKEWVIVDKEQDLQDFRTNEVLGHKTTGSPSDEEPEVLQVLEGSPQDEKIQVGPWTDNHHLKKESSGVVLALSAECPATAASELYTDRLDLQAGAASQFITVTPTSPMEAQAEGPLTAITIPRPSVASTQSTSGSFHYGPQPEKKDLQPLEPTVELYSPRENFSGLVVTEGELASGGSRVDLGLQIDHTGHDMLPNMRDGDTSQDLGPKDPPDHNRLAVKEFEHLPGETEERSLLLGSENEDERLSKGQHCIEVSSPGELVTAERAQLAATEPLHVSETQNCSVLPNQDKTHEIMKLLAVGTSEISPQAIDPHAEGQIGQMAAMQKNKLFKDDGIQSESLPRQQGDLSAFLHQEGKREKVVPRNGELYHCVSENEHGPPTRKDMLRSSFVTRHSRIPVLAQEIDSTFESSSAISAKEKLLQKKAYQPEIVKLLVEKRQFKSFLGDLSSASDKLIEEKLAAVPVPFSEEEVFAPFSRLAADSHLSRSVEDSFLSPIISQARKSKIPRPVSWVSTDQINGSASPQFLPRPPPGKPPVRPGVEARLRRYKVLGSSNSDSDLFSRLAQILQNGSQKSRSTTQCKSPGSPHNPKTPPKSPVVPRRSPSASPRSSSLPRTSSSSPSRAGRPHHDQRSSSPHLGRSKSPPSHSGSSSSRRSCQQEHCKPSKNGPKGSGSLHHHSTSSKTPPGKSKPASKLSR</sequence>
<protein>
    <recommendedName>
        <fullName>Tau-tubulin kinase 2</fullName>
        <ecNumber>2.7.11.1</ecNumber>
    </recommendedName>
    <alternativeName>
        <fullName>Protein bartleby</fullName>
    </alternativeName>
</protein>
<feature type="chain" id="PRO_0000234343" description="Tau-tubulin kinase 2">
    <location>
        <begin position="1"/>
        <end position="1243"/>
    </location>
</feature>
<feature type="domain" description="Protein kinase" evidence="2">
    <location>
        <begin position="21"/>
        <end position="284"/>
    </location>
</feature>
<feature type="region of interest" description="Disordered" evidence="3">
    <location>
        <begin position="674"/>
        <end position="695"/>
    </location>
</feature>
<feature type="region of interest" description="Disordered" evidence="3">
    <location>
        <begin position="737"/>
        <end position="761"/>
    </location>
</feature>
<feature type="region of interest" description="Disordered" evidence="3">
    <location>
        <begin position="1063"/>
        <end position="1086"/>
    </location>
</feature>
<feature type="region of interest" description="Disordered" evidence="3">
    <location>
        <begin position="1115"/>
        <end position="1243"/>
    </location>
</feature>
<feature type="compositionally biased region" description="Polar residues" evidence="3">
    <location>
        <begin position="674"/>
        <end position="683"/>
    </location>
</feature>
<feature type="compositionally biased region" description="Pro residues" evidence="3">
    <location>
        <begin position="1073"/>
        <end position="1084"/>
    </location>
</feature>
<feature type="compositionally biased region" description="Polar residues" evidence="3">
    <location>
        <begin position="1115"/>
        <end position="1129"/>
    </location>
</feature>
<feature type="compositionally biased region" description="Low complexity" evidence="3">
    <location>
        <begin position="1144"/>
        <end position="1170"/>
    </location>
</feature>
<feature type="compositionally biased region" description="Low complexity" evidence="3">
    <location>
        <begin position="1187"/>
        <end position="1202"/>
    </location>
</feature>
<feature type="compositionally biased region" description="Low complexity" evidence="3">
    <location>
        <begin position="1227"/>
        <end position="1243"/>
    </location>
</feature>
<feature type="active site" description="Proton acceptor" evidence="2">
    <location>
        <position position="141"/>
    </location>
</feature>
<feature type="binding site" evidence="2">
    <location>
        <begin position="27"/>
        <end position="35"/>
    </location>
    <ligand>
        <name>ATP</name>
        <dbReference type="ChEBI" id="CHEBI:30616"/>
    </ligand>
</feature>
<feature type="binding site" evidence="2">
    <location>
        <position position="50"/>
    </location>
    <ligand>
        <name>ATP</name>
        <dbReference type="ChEBI" id="CHEBI:30616"/>
    </ligand>
</feature>
<feature type="modified residue" description="Phosphoserine" evidence="1">
    <location>
        <position position="445"/>
    </location>
</feature>
<feature type="modified residue" description="Phosphoserine" evidence="1">
    <location>
        <position position="786"/>
    </location>
</feature>
<feature type="modified residue" description="Phosphoserine" evidence="1">
    <location>
        <position position="1102"/>
    </location>
</feature>
<feature type="splice variant" id="VSP_018276" description="In isoform 2." evidence="7">
    <original>LRRYKVLGSSNSDSDLFSRLAQILQNGSQKSRSTTQCKSPGSPHNPKTPPKSPVVPRRSPSASPRSSSLPRTSSSSPSRAGRPHHDQRSSSPHLGRSKSPPSHSGSSSSRRSCQQEHCKPSKNGPKGSGSLHHHSTSSKTPPGKSKPASKLSR</original>
    <variation>PGSPQAVHLITLLQGPGNQRKAPRRPAGLAGWADLPGPPEPHPSRTRPVVQRSIPVAGSAPPGCPWRECACSVASERLHRDGGRFRVAAARRGAGRSRRAVDRAQHPEFGG</variation>
    <location>
        <begin position="1091"/>
        <end position="1243"/>
    </location>
</feature>
<feature type="mutagenesis site" description="Abolishes serine/threonine-protein kinase activity and ability to initiate ciliogenesis." evidence="5">
    <original>D</original>
    <variation>A</variation>
    <location>
        <position position="163"/>
    </location>
</feature>
<feature type="sequence conflict" description="In Ref. 4; BAB62004." evidence="7" ref="4">
    <original>Y</original>
    <variation>C</variation>
    <location>
        <position position="192"/>
    </location>
</feature>
<feature type="sequence conflict" description="In Ref. 4; BAB62004." evidence="7" ref="4">
    <original>N</original>
    <variation>D</variation>
    <location>
        <position position="196"/>
    </location>
</feature>
<feature type="sequence conflict" description="In Ref. 4; BAB62004." evidence="7" ref="4">
    <original>K</original>
    <variation>E</variation>
    <location>
        <position position="228"/>
    </location>
</feature>
<feature type="sequence conflict" description="In Ref. 4; BAB62004." evidence="7" ref="4">
    <original>LHTR</original>
    <variation>CTPA</variation>
    <location>
        <begin position="317"/>
        <end position="320"/>
    </location>
</feature>
<feature type="sequence conflict" description="In Ref. 2; BAE28449." evidence="7" ref="2">
    <original>P</original>
    <variation>L</variation>
    <location>
        <position position="490"/>
    </location>
</feature>
<feature type="sequence conflict" description="In Ref. 2; BAE28449." evidence="7" ref="2">
    <original>H</original>
    <variation>R</variation>
    <location>
        <position position="500"/>
    </location>
</feature>
<feature type="sequence conflict" description="In Ref. 2; BAE28449." evidence="7" ref="2">
    <original>G</original>
    <variation>V</variation>
    <location>
        <position position="591"/>
    </location>
</feature>
<feature type="sequence conflict" description="In Ref. 2; BAE28449." evidence="7" ref="2">
    <original>R</original>
    <variation>G</variation>
    <location>
        <position position="890"/>
    </location>
</feature>
<comment type="function">
    <text evidence="1 4 5 6">Serine/threonine kinase that acts as a key regulator of ciliogenesis: controls the initiation of ciliogenesis by binding to the distal end of the basal body and promoting the removal of CCP110, which caps the mother centriole, leading to the recruitment of IFT proteins, which build the ciliary axoneme. Has some substrate preference for proteins that are already phosphorylated on a Tyr residue at the +2 position relative to the phosphorylation site. Able to phosphorylate tau on serines in vitro (PubMed:23141541). Phosphorylates MPHOSPH9 which promotes its ubiquitination and proteasomal degradation, loss of MPHOSPH9 facilitates the removal of the CP110-CEP97 complex (a negative regulator of ciliogenesis) from the mother centrioles, promoting the initiation of ciliogenesis (By similarity). Required for recruitment of CPLANE2 and INTU to the mother centriole (PubMed:29038301).</text>
</comment>
<comment type="catalytic activity">
    <reaction>
        <text>L-seryl-[protein] + ATP = O-phospho-L-seryl-[protein] + ADP + H(+)</text>
        <dbReference type="Rhea" id="RHEA:17989"/>
        <dbReference type="Rhea" id="RHEA-COMP:9863"/>
        <dbReference type="Rhea" id="RHEA-COMP:11604"/>
        <dbReference type="ChEBI" id="CHEBI:15378"/>
        <dbReference type="ChEBI" id="CHEBI:29999"/>
        <dbReference type="ChEBI" id="CHEBI:30616"/>
        <dbReference type="ChEBI" id="CHEBI:83421"/>
        <dbReference type="ChEBI" id="CHEBI:456216"/>
        <dbReference type="EC" id="2.7.11.1"/>
    </reaction>
</comment>
<comment type="catalytic activity">
    <reaction>
        <text>L-threonyl-[protein] + ATP = O-phospho-L-threonyl-[protein] + ADP + H(+)</text>
        <dbReference type="Rhea" id="RHEA:46608"/>
        <dbReference type="Rhea" id="RHEA-COMP:11060"/>
        <dbReference type="Rhea" id="RHEA-COMP:11605"/>
        <dbReference type="ChEBI" id="CHEBI:15378"/>
        <dbReference type="ChEBI" id="CHEBI:30013"/>
        <dbReference type="ChEBI" id="CHEBI:30616"/>
        <dbReference type="ChEBI" id="CHEBI:61977"/>
        <dbReference type="ChEBI" id="CHEBI:456216"/>
        <dbReference type="EC" id="2.7.11.1"/>
    </reaction>
</comment>
<comment type="subunit">
    <text evidence="1">Interacts with CEP164. Interacts with MCRS1; the interaction is required for recruitment of TTBK2 to the mother centriole.</text>
</comment>
<comment type="subcellular location">
    <subcellularLocation>
        <location evidence="5">Cell projection</location>
        <location evidence="5">Cilium</location>
    </subcellularLocation>
    <subcellularLocation>
        <location evidence="5 6">Cytoplasm</location>
        <location evidence="5 6">Cytoskeleton</location>
        <location evidence="5 6">Cilium basal body</location>
    </subcellularLocation>
    <subcellularLocation>
        <location evidence="5 6">Cytoplasm</location>
        <location evidence="5 6">Cytoskeleton</location>
        <location evidence="5 6">Microtubule organizing center</location>
        <location evidence="5 6">Centrosome</location>
        <location evidence="5 6">Centriole</location>
    </subcellularLocation>
    <subcellularLocation>
        <location evidence="1">Cytoplasm</location>
        <location evidence="1">Cytosol</location>
    </subcellularLocation>
    <subcellularLocation>
        <location evidence="1">Nucleus</location>
    </subcellularLocation>
    <text evidence="1 6">Localizes at the transition zone, a region between the basal body and the ciliary axoneme (PubMed:29038301). May also be present in cytosol and, at lower level in the nucleus (By similarity).</text>
</comment>
<comment type="alternative products">
    <event type="alternative splicing"/>
    <isoform>
        <id>Q3UVR3-1</id>
        <name>1</name>
        <sequence type="displayed"/>
    </isoform>
    <isoform>
        <id>Q3UVR3-2</id>
        <name>2</name>
        <sequence type="described" ref="VSP_018276"/>
    </isoform>
</comment>
<comment type="disruption phenotype">
    <text evidence="5">Defects in Ttbk2 are the cause of the bartleby (bby) phenotype characterized by defects in sonic hedgehog/SHH signaling and ciliogenesis. Embryos display morphological defects at midgestation similar to those seen in mutants that lack cilia, including holoprosencephaly, twisted body axis, abnormal limb development and randomized laterality of heart looping. Mutants die at midgestation (around 10.5 dpc).</text>
</comment>
<comment type="similarity">
    <text evidence="7">Belongs to the protein kinase superfamily. CK1 Ser/Thr protein kinase family.</text>
</comment>
<comment type="sequence caution" evidence="7">
    <conflict type="erroneous initiation">
        <sequence resource="EMBL-CDS" id="BAD90183"/>
    </conflict>
    <text>Extended N-terminus.</text>
</comment>
<keyword id="KW-0025">Alternative splicing</keyword>
<keyword id="KW-0067">ATP-binding</keyword>
<keyword id="KW-0966">Cell projection</keyword>
<keyword id="KW-0969">Cilium</keyword>
<keyword id="KW-0970">Cilium biogenesis/degradation</keyword>
<keyword id="KW-0963">Cytoplasm</keyword>
<keyword id="KW-0206">Cytoskeleton</keyword>
<keyword id="KW-0418">Kinase</keyword>
<keyword id="KW-0547">Nucleotide-binding</keyword>
<keyword id="KW-0539">Nucleus</keyword>
<keyword id="KW-0597">Phosphoprotein</keyword>
<keyword id="KW-1185">Reference proteome</keyword>
<keyword id="KW-0723">Serine/threonine-protein kinase</keyword>
<keyword id="KW-0808">Transferase</keyword>
<reference key="1">
    <citation type="journal article" date="2005" name="Science">
        <title>The transcriptional landscape of the mammalian genome.</title>
        <authorList>
            <person name="Carninci P."/>
            <person name="Kasukawa T."/>
            <person name="Katayama S."/>
            <person name="Gough J."/>
            <person name="Frith M.C."/>
            <person name="Maeda N."/>
            <person name="Oyama R."/>
            <person name="Ravasi T."/>
            <person name="Lenhard B."/>
            <person name="Wells C."/>
            <person name="Kodzius R."/>
            <person name="Shimokawa K."/>
            <person name="Bajic V.B."/>
            <person name="Brenner S.E."/>
            <person name="Batalov S."/>
            <person name="Forrest A.R."/>
            <person name="Zavolan M."/>
            <person name="Davis M.J."/>
            <person name="Wilming L.G."/>
            <person name="Aidinis V."/>
            <person name="Allen J.E."/>
            <person name="Ambesi-Impiombato A."/>
            <person name="Apweiler R."/>
            <person name="Aturaliya R.N."/>
            <person name="Bailey T.L."/>
            <person name="Bansal M."/>
            <person name="Baxter L."/>
            <person name="Beisel K.W."/>
            <person name="Bersano T."/>
            <person name="Bono H."/>
            <person name="Chalk A.M."/>
            <person name="Chiu K.P."/>
            <person name="Choudhary V."/>
            <person name="Christoffels A."/>
            <person name="Clutterbuck D.R."/>
            <person name="Crowe M.L."/>
            <person name="Dalla E."/>
            <person name="Dalrymple B.P."/>
            <person name="de Bono B."/>
            <person name="Della Gatta G."/>
            <person name="di Bernardo D."/>
            <person name="Down T."/>
            <person name="Engstrom P."/>
            <person name="Fagiolini M."/>
            <person name="Faulkner G."/>
            <person name="Fletcher C.F."/>
            <person name="Fukushima T."/>
            <person name="Furuno M."/>
            <person name="Futaki S."/>
            <person name="Gariboldi M."/>
            <person name="Georgii-Hemming P."/>
            <person name="Gingeras T.R."/>
            <person name="Gojobori T."/>
            <person name="Green R.E."/>
            <person name="Gustincich S."/>
            <person name="Harbers M."/>
            <person name="Hayashi Y."/>
            <person name="Hensch T.K."/>
            <person name="Hirokawa N."/>
            <person name="Hill D."/>
            <person name="Huminiecki L."/>
            <person name="Iacono M."/>
            <person name="Ikeo K."/>
            <person name="Iwama A."/>
            <person name="Ishikawa T."/>
            <person name="Jakt M."/>
            <person name="Kanapin A."/>
            <person name="Katoh M."/>
            <person name="Kawasawa Y."/>
            <person name="Kelso J."/>
            <person name="Kitamura H."/>
            <person name="Kitano H."/>
            <person name="Kollias G."/>
            <person name="Krishnan S.P."/>
            <person name="Kruger A."/>
            <person name="Kummerfeld S.K."/>
            <person name="Kurochkin I.V."/>
            <person name="Lareau L.F."/>
            <person name="Lazarevic D."/>
            <person name="Lipovich L."/>
            <person name="Liu J."/>
            <person name="Liuni S."/>
            <person name="McWilliam S."/>
            <person name="Madan Babu M."/>
            <person name="Madera M."/>
            <person name="Marchionni L."/>
            <person name="Matsuda H."/>
            <person name="Matsuzawa S."/>
            <person name="Miki H."/>
            <person name="Mignone F."/>
            <person name="Miyake S."/>
            <person name="Morris K."/>
            <person name="Mottagui-Tabar S."/>
            <person name="Mulder N."/>
            <person name="Nakano N."/>
            <person name="Nakauchi H."/>
            <person name="Ng P."/>
            <person name="Nilsson R."/>
            <person name="Nishiguchi S."/>
            <person name="Nishikawa S."/>
            <person name="Nori F."/>
            <person name="Ohara O."/>
            <person name="Okazaki Y."/>
            <person name="Orlando V."/>
            <person name="Pang K.C."/>
            <person name="Pavan W.J."/>
            <person name="Pavesi G."/>
            <person name="Pesole G."/>
            <person name="Petrovsky N."/>
            <person name="Piazza S."/>
            <person name="Reed J."/>
            <person name="Reid J.F."/>
            <person name="Ring B.Z."/>
            <person name="Ringwald M."/>
            <person name="Rost B."/>
            <person name="Ruan Y."/>
            <person name="Salzberg S.L."/>
            <person name="Sandelin A."/>
            <person name="Schneider C."/>
            <person name="Schoenbach C."/>
            <person name="Sekiguchi K."/>
            <person name="Semple C.A."/>
            <person name="Seno S."/>
            <person name="Sessa L."/>
            <person name="Sheng Y."/>
            <person name="Shibata Y."/>
            <person name="Shimada H."/>
            <person name="Shimada K."/>
            <person name="Silva D."/>
            <person name="Sinclair B."/>
            <person name="Sperling S."/>
            <person name="Stupka E."/>
            <person name="Sugiura K."/>
            <person name="Sultana R."/>
            <person name="Takenaka Y."/>
            <person name="Taki K."/>
            <person name="Tammoja K."/>
            <person name="Tan S.L."/>
            <person name="Tang S."/>
            <person name="Taylor M.S."/>
            <person name="Tegner J."/>
            <person name="Teichmann S.A."/>
            <person name="Ueda H.R."/>
            <person name="van Nimwegen E."/>
            <person name="Verardo R."/>
            <person name="Wei C.L."/>
            <person name="Yagi K."/>
            <person name="Yamanishi H."/>
            <person name="Zabarovsky E."/>
            <person name="Zhu S."/>
            <person name="Zimmer A."/>
            <person name="Hide W."/>
            <person name="Bult C."/>
            <person name="Grimmond S.M."/>
            <person name="Teasdale R.D."/>
            <person name="Liu E.T."/>
            <person name="Brusic V."/>
            <person name="Quackenbush J."/>
            <person name="Wahlestedt C."/>
            <person name="Mattick J.S."/>
            <person name="Hume D.A."/>
            <person name="Kai C."/>
            <person name="Sasaki D."/>
            <person name="Tomaru Y."/>
            <person name="Fukuda S."/>
            <person name="Kanamori-Katayama M."/>
            <person name="Suzuki M."/>
            <person name="Aoki J."/>
            <person name="Arakawa T."/>
            <person name="Iida J."/>
            <person name="Imamura K."/>
            <person name="Itoh M."/>
            <person name="Kato T."/>
            <person name="Kawaji H."/>
            <person name="Kawagashira N."/>
            <person name="Kawashima T."/>
            <person name="Kojima M."/>
            <person name="Kondo S."/>
            <person name="Konno H."/>
            <person name="Nakano K."/>
            <person name="Ninomiya N."/>
            <person name="Nishio T."/>
            <person name="Okada M."/>
            <person name="Plessy C."/>
            <person name="Shibata K."/>
            <person name="Shiraki T."/>
            <person name="Suzuki S."/>
            <person name="Tagami M."/>
            <person name="Waki K."/>
            <person name="Watahiki A."/>
            <person name="Okamura-Oho Y."/>
            <person name="Suzuki H."/>
            <person name="Kawai J."/>
            <person name="Hayashizaki Y."/>
        </authorList>
    </citation>
    <scope>NUCLEOTIDE SEQUENCE [LARGE SCALE MRNA]</scope>
    <source>
        <strain>C57BL/6J</strain>
        <tissue>Embryo</tissue>
        <tissue>Eye</tissue>
        <tissue>Medulla oblongata</tissue>
    </source>
</reference>
<reference key="2">
    <citation type="submission" date="2005-02" db="EMBL/GenBank/DDBJ databases">
        <title>Prediction of the coding sequences of mouse homologues of KIAA gene. The complete nucleotide sequences of mouse KIAA-homologous cDNAs identified by screening of terminal sequences of cDNA clones randomly sampled from size-fractionated libraries.</title>
        <authorList>
            <person name="Okazaki N."/>
            <person name="Kikuno R.F."/>
            <person name="Ohara R."/>
            <person name="Inamoto S."/>
            <person name="Nagase T."/>
            <person name="Ohara O."/>
            <person name="Koga H."/>
        </authorList>
    </citation>
    <scope>NUCLEOTIDE SEQUENCE [LARGE SCALE MRNA]</scope>
    <source>
        <tissue>Pancreatic islet</tissue>
    </source>
</reference>
<reference key="3">
    <citation type="journal article" date="2009" name="PLoS Biol.">
        <title>Lineage-specific biology revealed by a finished genome assembly of the mouse.</title>
        <authorList>
            <person name="Church D.M."/>
            <person name="Goodstadt L."/>
            <person name="Hillier L.W."/>
            <person name="Zody M.C."/>
            <person name="Goldstein S."/>
            <person name="She X."/>
            <person name="Bult C.J."/>
            <person name="Agarwala R."/>
            <person name="Cherry J.L."/>
            <person name="DiCuccio M."/>
            <person name="Hlavina W."/>
            <person name="Kapustin Y."/>
            <person name="Meric P."/>
            <person name="Maglott D."/>
            <person name="Birtle Z."/>
            <person name="Marques A.C."/>
            <person name="Graves T."/>
            <person name="Zhou S."/>
            <person name="Teague B."/>
            <person name="Potamousis K."/>
            <person name="Churas C."/>
            <person name="Place M."/>
            <person name="Herschleb J."/>
            <person name="Runnheim R."/>
            <person name="Forrest D."/>
            <person name="Amos-Landgraf J."/>
            <person name="Schwartz D.C."/>
            <person name="Cheng Z."/>
            <person name="Lindblad-Toh K."/>
            <person name="Eichler E.E."/>
            <person name="Ponting C.P."/>
        </authorList>
    </citation>
    <scope>NUCLEOTIDE SEQUENCE [LARGE SCALE GENOMIC DNA]</scope>
    <source>
        <strain>C57BL/6J</strain>
    </source>
</reference>
<reference key="4">
    <citation type="journal article" date="2001" name="FEBS Lett.">
        <title>Tau-tubulin kinase phosphorylates tau at Ser-208 and Ser-210, sites found in paired helical filament-tau.</title>
        <authorList>
            <person name="Tomizawa K."/>
            <person name="Omori A."/>
            <person name="Ohtake A."/>
            <person name="Sato K."/>
            <person name="Takahashi M."/>
        </authorList>
    </citation>
    <scope>NUCLEOTIDE SEQUENCE [MRNA] OF 1-320</scope>
    <scope>FUNCTION</scope>
    <source>
        <tissue>Brain</tissue>
    </source>
</reference>
<reference key="5">
    <citation type="journal article" date="2012" name="Cell">
        <title>The spinocerebellar ataxia-associated gene tau tubulin kinase 2 controls the initiation of ciliogenesis.</title>
        <authorList>
            <person name="Goetz S.C."/>
            <person name="Liem K.F. Jr."/>
            <person name="Anderson K.V."/>
        </authorList>
    </citation>
    <scope>FUNCTION</scope>
    <scope>SUBCELLULAR LOCATION</scope>
    <scope>DISRUPTION PHENOTYPE</scope>
    <scope>MUTAGENESIS OF ASP-163</scope>
</reference>
<reference key="6">
    <citation type="journal article" date="2018" name="J. Cell Biol.">
        <title>The small GTPase RSG1 controls a final step in primary cilia initiation.</title>
        <authorList>
            <person name="Agbu S.O."/>
            <person name="Liang Y."/>
            <person name="Liu A."/>
            <person name="Anderson K.V."/>
        </authorList>
    </citation>
    <scope>FUNCTION</scope>
    <scope>SUBCELLULAR LOCATION</scope>
</reference>
<evidence type="ECO:0000250" key="1">
    <source>
        <dbReference type="UniProtKB" id="Q6IQ55"/>
    </source>
</evidence>
<evidence type="ECO:0000255" key="2">
    <source>
        <dbReference type="PROSITE-ProRule" id="PRU00159"/>
    </source>
</evidence>
<evidence type="ECO:0000256" key="3">
    <source>
        <dbReference type="SAM" id="MobiDB-lite"/>
    </source>
</evidence>
<evidence type="ECO:0000269" key="4">
    <source>
    </source>
</evidence>
<evidence type="ECO:0000269" key="5">
    <source>
    </source>
</evidence>
<evidence type="ECO:0000269" key="6">
    <source>
    </source>
</evidence>
<evidence type="ECO:0000305" key="7"/>